<keyword id="KW-0325">Glycoprotein</keyword>
<keyword id="KW-0378">Hydrolase</keyword>
<keyword id="KW-0443">Lipid metabolism</keyword>
<keyword id="KW-0456">Lyase</keyword>
<keyword id="KW-0479">Metal-binding</keyword>
<keyword id="KW-0645">Protease</keyword>
<keyword id="KW-1185">Reference proteome</keyword>
<keyword id="KW-0964">Secreted</keyword>
<keyword id="KW-0732">Signal</keyword>
<keyword id="KW-0862">Zinc</keyword>
<organism>
    <name type="scientific">Bos taurus</name>
    <name type="common">Bovine</name>
    <dbReference type="NCBI Taxonomy" id="9913"/>
    <lineage>
        <taxon>Eukaryota</taxon>
        <taxon>Metazoa</taxon>
        <taxon>Chordata</taxon>
        <taxon>Craniata</taxon>
        <taxon>Vertebrata</taxon>
        <taxon>Euteleostomi</taxon>
        <taxon>Mammalia</taxon>
        <taxon>Eutheria</taxon>
        <taxon>Laurasiatheria</taxon>
        <taxon>Artiodactyla</taxon>
        <taxon>Ruminantia</taxon>
        <taxon>Pecora</taxon>
        <taxon>Bovidae</taxon>
        <taxon>Bovinae</taxon>
        <taxon>Bos</taxon>
    </lineage>
</organism>
<gene>
    <name evidence="2" type="primary">PM20D1</name>
</gene>
<evidence type="ECO:0000250" key="1"/>
<evidence type="ECO:0000250" key="2">
    <source>
        <dbReference type="UniProtKB" id="Q8C165"/>
    </source>
</evidence>
<evidence type="ECO:0000255" key="3"/>
<evidence type="ECO:0000305" key="4"/>
<accession>Q2T9M7</accession>
<feature type="signal peptide" evidence="3">
    <location>
        <begin position="1"/>
        <end position="25"/>
    </location>
</feature>
<feature type="chain" id="PRO_0000321927" description="N-fatty-acyl-amino acid synthase/hydrolase PM20D1">
    <location>
        <begin position="26"/>
        <end position="503"/>
    </location>
</feature>
<feature type="active site" evidence="1">
    <location>
        <position position="127"/>
    </location>
</feature>
<feature type="active site" description="Proton acceptor" evidence="1">
    <location>
        <position position="191"/>
    </location>
</feature>
<feature type="binding site" evidence="1">
    <location>
        <position position="125"/>
    </location>
    <ligand>
        <name>Zn(2+)</name>
        <dbReference type="ChEBI" id="CHEBI:29105"/>
        <label>2</label>
    </ligand>
</feature>
<feature type="binding site" evidence="1">
    <location>
        <position position="157"/>
    </location>
    <ligand>
        <name>Zn(2+)</name>
        <dbReference type="ChEBI" id="CHEBI:29105"/>
        <label>1</label>
    </ligand>
</feature>
<feature type="binding site" evidence="1">
    <location>
        <position position="157"/>
    </location>
    <ligand>
        <name>Zn(2+)</name>
        <dbReference type="ChEBI" id="CHEBI:29105"/>
        <label>2</label>
    </ligand>
</feature>
<feature type="binding site" evidence="1">
    <location>
        <position position="192"/>
    </location>
    <ligand>
        <name>Zn(2+)</name>
        <dbReference type="ChEBI" id="CHEBI:29105"/>
        <label>1</label>
    </ligand>
</feature>
<feature type="binding site" evidence="1">
    <location>
        <position position="218"/>
    </location>
    <ligand>
        <name>Zn(2+)</name>
        <dbReference type="ChEBI" id="CHEBI:29105"/>
        <label>2</label>
    </ligand>
</feature>
<feature type="binding site" evidence="1">
    <location>
        <position position="465"/>
    </location>
    <ligand>
        <name>Zn(2+)</name>
        <dbReference type="ChEBI" id="CHEBI:29105"/>
        <label>1</label>
    </ligand>
</feature>
<feature type="glycosylation site" description="N-linked (GlcNAc...) asparagine" evidence="3">
    <location>
        <position position="72"/>
    </location>
</feature>
<name>P20D1_BOVIN</name>
<proteinExistence type="evidence at transcript level"/>
<comment type="function">
    <text evidence="2">Secreted enzyme that regulates the endogenous N-fatty acyl amino acid (NAAs) tissue and circulating levels by functioning as a bidirectional NAA synthase/hydrolase. It condenses free fatty acids and free amino acids to generate NAAs and bidirectionally catalyzes the reverse hydrolysis reaction. Some of these NAAs stimulate oxidative metabolism via mitochondrial uncoupling, increasing energy expenditure in a UPC1-independent manner. Thereby, this secreted protein may indirectly regulate whole body energy expenditure. PM20D1 circulates in tight association with both low- and high-density (LDL and HDL,respectively) lipoprotein particles.</text>
</comment>
<comment type="catalytic activity">
    <reaction evidence="2">
        <text>an N-acyl-L-amino acid + H2O = an L-alpha-amino acid + a carboxylate</text>
        <dbReference type="Rhea" id="RHEA:15565"/>
        <dbReference type="ChEBI" id="CHEBI:15377"/>
        <dbReference type="ChEBI" id="CHEBI:29067"/>
        <dbReference type="ChEBI" id="CHEBI:59869"/>
        <dbReference type="ChEBI" id="CHEBI:59874"/>
        <dbReference type="EC" id="3.5.1.14"/>
    </reaction>
    <physiologicalReaction direction="left-to-right" evidence="2">
        <dbReference type="Rhea" id="RHEA:15566"/>
    </physiologicalReaction>
    <physiologicalReaction direction="right-to-left" evidence="2">
        <dbReference type="Rhea" id="RHEA:15567"/>
    </physiologicalReaction>
</comment>
<comment type="catalytic activity">
    <reaction evidence="2">
        <text>an N-acyl-aromatic L-alpha-amino acid + H2O = an aromatic L-alpha-amino acid + a carboxylate</text>
        <dbReference type="Rhea" id="RHEA:54184"/>
        <dbReference type="ChEBI" id="CHEBI:15377"/>
        <dbReference type="ChEBI" id="CHEBI:29067"/>
        <dbReference type="ChEBI" id="CHEBI:84824"/>
        <dbReference type="ChEBI" id="CHEBI:138093"/>
        <dbReference type="EC" id="3.5.1.114"/>
    </reaction>
    <physiologicalReaction direction="left-to-right" evidence="2">
        <dbReference type="Rhea" id="RHEA:54185"/>
    </physiologicalReaction>
    <physiologicalReaction direction="right-to-left" evidence="2">
        <dbReference type="Rhea" id="RHEA:54186"/>
    </physiologicalReaction>
</comment>
<comment type="catalytic activity">
    <reaction evidence="2">
        <text>N-(5Z,8Z,11Z,14Z)-eicosatetraenoyl-glycine + H2O = (5Z,8Z,11Z,14Z)-eicosatetraenoate + glycine</text>
        <dbReference type="Rhea" id="RHEA:64108"/>
        <dbReference type="ChEBI" id="CHEBI:15377"/>
        <dbReference type="ChEBI" id="CHEBI:32395"/>
        <dbReference type="ChEBI" id="CHEBI:57305"/>
        <dbReference type="ChEBI" id="CHEBI:59002"/>
    </reaction>
    <physiologicalReaction direction="left-to-right" evidence="2">
        <dbReference type="Rhea" id="RHEA:64109"/>
    </physiologicalReaction>
    <physiologicalReaction direction="right-to-left" evidence="2">
        <dbReference type="Rhea" id="RHEA:64110"/>
    </physiologicalReaction>
</comment>
<comment type="catalytic activity">
    <reaction evidence="2">
        <text>N-hexadecanoyl-L-phenylalanine + H2O = hexadecanoate + L-phenylalanine</text>
        <dbReference type="Rhea" id="RHEA:64124"/>
        <dbReference type="ChEBI" id="CHEBI:7896"/>
        <dbReference type="ChEBI" id="CHEBI:15377"/>
        <dbReference type="ChEBI" id="CHEBI:58095"/>
        <dbReference type="ChEBI" id="CHEBI:149699"/>
    </reaction>
    <physiologicalReaction direction="left-to-right" evidence="2">
        <dbReference type="Rhea" id="RHEA:64125"/>
    </physiologicalReaction>
</comment>
<comment type="catalytic activity">
    <reaction evidence="2">
        <text>N-octadecanoyl-L-phenylalanine + H2O = octadecanoate + L-phenylalanine</text>
        <dbReference type="Rhea" id="RHEA:64128"/>
        <dbReference type="ChEBI" id="CHEBI:15377"/>
        <dbReference type="ChEBI" id="CHEBI:25629"/>
        <dbReference type="ChEBI" id="CHEBI:58095"/>
        <dbReference type="ChEBI" id="CHEBI:149700"/>
    </reaction>
    <physiologicalReaction direction="left-to-right" evidence="2">
        <dbReference type="Rhea" id="RHEA:64129"/>
    </physiologicalReaction>
</comment>
<comment type="catalytic activity">
    <reaction evidence="2">
        <text>N-(4Z,7Z,10Z,13Z,16Z,19Z-docosahexaenoyl)-L-phenylalanine + H2O = (4Z,7Z,10Z,13Z,16Z,19Z)-docosahexaenoate + L-phenylalanine</text>
        <dbReference type="Rhea" id="RHEA:64132"/>
        <dbReference type="ChEBI" id="CHEBI:15377"/>
        <dbReference type="ChEBI" id="CHEBI:58095"/>
        <dbReference type="ChEBI" id="CHEBI:77016"/>
        <dbReference type="ChEBI" id="CHEBI:149701"/>
    </reaction>
    <physiologicalReaction direction="left-to-right" evidence="2">
        <dbReference type="Rhea" id="RHEA:64133"/>
    </physiologicalReaction>
</comment>
<comment type="catalytic activity">
    <reaction evidence="2">
        <text>N-(9Z-octadecenoyl)-L-asparagine + H2O = L-asparagine + (9Z)-octadecenoate</text>
        <dbReference type="Rhea" id="RHEA:64136"/>
        <dbReference type="ChEBI" id="CHEBI:15377"/>
        <dbReference type="ChEBI" id="CHEBI:30823"/>
        <dbReference type="ChEBI" id="CHEBI:58048"/>
        <dbReference type="ChEBI" id="CHEBI:149730"/>
    </reaction>
    <physiologicalReaction direction="left-to-right" evidence="2">
        <dbReference type="Rhea" id="RHEA:64137"/>
    </physiologicalReaction>
</comment>
<comment type="catalytic activity">
    <reaction evidence="2">
        <text>(9Z)-octadecenoate + glycine = N-(9Z-octadecenoyl)glycine + H2O</text>
        <dbReference type="Rhea" id="RHEA:51316"/>
        <dbReference type="ChEBI" id="CHEBI:15377"/>
        <dbReference type="ChEBI" id="CHEBI:30823"/>
        <dbReference type="ChEBI" id="CHEBI:57305"/>
        <dbReference type="ChEBI" id="CHEBI:133992"/>
    </reaction>
    <physiologicalReaction direction="right-to-left" evidence="2">
        <dbReference type="Rhea" id="RHEA:51318"/>
    </physiologicalReaction>
</comment>
<comment type="catalytic activity">
    <reaction evidence="2">
        <text>N-(9Z-octadecenoyl)-L-lysine + H2O = L-lysine + (9Z)-octadecenoate</text>
        <dbReference type="Rhea" id="RHEA:64192"/>
        <dbReference type="ChEBI" id="CHEBI:15377"/>
        <dbReference type="ChEBI" id="CHEBI:30823"/>
        <dbReference type="ChEBI" id="CHEBI:32551"/>
        <dbReference type="ChEBI" id="CHEBI:149731"/>
    </reaction>
    <physiologicalReaction direction="left-to-right" evidence="2">
        <dbReference type="Rhea" id="RHEA:64193"/>
    </physiologicalReaction>
</comment>
<comment type="catalytic activity">
    <reaction evidence="2">
        <text>N-(9Z-octadecenoyl)-L-methionine + H2O = (9Z)-octadecenoate + L-methionine</text>
        <dbReference type="Rhea" id="RHEA:64144"/>
        <dbReference type="ChEBI" id="CHEBI:15377"/>
        <dbReference type="ChEBI" id="CHEBI:30823"/>
        <dbReference type="ChEBI" id="CHEBI:57844"/>
        <dbReference type="ChEBI" id="CHEBI:149732"/>
    </reaction>
    <physiologicalReaction direction="left-to-right" evidence="2">
        <dbReference type="Rhea" id="RHEA:64145"/>
    </physiologicalReaction>
</comment>
<comment type="catalytic activity">
    <reaction evidence="2">
        <text>N-(9Z-octadecenoyl)-L-serine + H2O = L-serine + (9Z)-octadecenoate</text>
        <dbReference type="Rhea" id="RHEA:51352"/>
        <dbReference type="ChEBI" id="CHEBI:15377"/>
        <dbReference type="ChEBI" id="CHEBI:30823"/>
        <dbReference type="ChEBI" id="CHEBI:33384"/>
        <dbReference type="ChEBI" id="CHEBI:134031"/>
    </reaction>
    <physiologicalReaction direction="left-to-right" evidence="2">
        <dbReference type="Rhea" id="RHEA:51353"/>
    </physiologicalReaction>
</comment>
<comment type="catalytic activity">
    <reaction evidence="2">
        <text>N-(9Z-octadecenoyl)-L-tryptophan + H2O = L-tryptophan + (9Z)-octadecenoate</text>
        <dbReference type="Rhea" id="RHEA:64176"/>
        <dbReference type="ChEBI" id="CHEBI:15377"/>
        <dbReference type="ChEBI" id="CHEBI:30823"/>
        <dbReference type="ChEBI" id="CHEBI:57912"/>
        <dbReference type="ChEBI" id="CHEBI:149733"/>
    </reaction>
    <physiologicalReaction direction="left-to-right" evidence="2">
        <dbReference type="Rhea" id="RHEA:64177"/>
    </physiologicalReaction>
</comment>
<comment type="catalytic activity">
    <reaction evidence="2">
        <text>N-(9Z-octadecenoyl)-L-tyrosine + H2O = L-tyrosine + (9Z)-octadecenoate</text>
        <dbReference type="Rhea" id="RHEA:64184"/>
        <dbReference type="ChEBI" id="CHEBI:15377"/>
        <dbReference type="ChEBI" id="CHEBI:30823"/>
        <dbReference type="ChEBI" id="CHEBI:58315"/>
        <dbReference type="ChEBI" id="CHEBI:149734"/>
    </reaction>
    <physiologicalReaction direction="left-to-right" evidence="2">
        <dbReference type="Rhea" id="RHEA:64185"/>
    </physiologicalReaction>
</comment>
<comment type="catalytic activity">
    <reaction evidence="2">
        <text>N-(9Z-octadecenoyl)-L-glutamine + H2O = L-glutamine + (9Z)-octadecenoate</text>
        <dbReference type="Rhea" id="RHEA:51356"/>
        <dbReference type="ChEBI" id="CHEBI:15377"/>
        <dbReference type="ChEBI" id="CHEBI:30823"/>
        <dbReference type="ChEBI" id="CHEBI:58359"/>
        <dbReference type="ChEBI" id="CHEBI:134033"/>
    </reaction>
    <physiologicalReaction direction="left-to-right" evidence="2">
        <dbReference type="Rhea" id="RHEA:51357"/>
    </physiologicalReaction>
</comment>
<comment type="catalytic activity">
    <reaction evidence="2">
        <text>N-(5Z,8Z,11Z,14Z-eicosatetraenoyl)-L-serine + H2O = (5Z,8Z,11Z,14Z)-eicosatetraenoate + L-serine</text>
        <dbReference type="Rhea" id="RHEA:64116"/>
        <dbReference type="ChEBI" id="CHEBI:15377"/>
        <dbReference type="ChEBI" id="CHEBI:32395"/>
        <dbReference type="ChEBI" id="CHEBI:33384"/>
        <dbReference type="ChEBI" id="CHEBI:149697"/>
    </reaction>
    <physiologicalReaction direction="left-to-right" evidence="2">
        <dbReference type="Rhea" id="RHEA:64117"/>
    </physiologicalReaction>
    <physiologicalReaction direction="right-to-left" evidence="2">
        <dbReference type="Rhea" id="RHEA:64118"/>
    </physiologicalReaction>
</comment>
<comment type="catalytic activity">
    <reaction evidence="2">
        <text>(5Z,8Z,11Z,14Z)-eicosatetraenoate + L-phenylalanine = N-(5Z,8Z,11Z,14Z-eicosatetraenoyl)-L-phenylalanine + H2O</text>
        <dbReference type="Rhea" id="RHEA:51312"/>
        <dbReference type="ChEBI" id="CHEBI:15377"/>
        <dbReference type="ChEBI" id="CHEBI:32395"/>
        <dbReference type="ChEBI" id="CHEBI:58095"/>
        <dbReference type="ChEBI" id="CHEBI:134022"/>
    </reaction>
    <physiologicalReaction direction="left-to-right" evidence="2">
        <dbReference type="Rhea" id="RHEA:51313"/>
    </physiologicalReaction>
    <physiologicalReaction direction="right-to-left" evidence="2">
        <dbReference type="Rhea" id="RHEA:51314"/>
    </physiologicalReaction>
</comment>
<comment type="catalytic activity">
    <reaction evidence="2">
        <text>N-(9Z-octadecenoyl)-L-leucine + H2O = L-leucine + (9Z)-octadecenoate</text>
        <dbReference type="Rhea" id="RHEA:51360"/>
        <dbReference type="ChEBI" id="CHEBI:15377"/>
        <dbReference type="ChEBI" id="CHEBI:30823"/>
        <dbReference type="ChEBI" id="CHEBI:57427"/>
        <dbReference type="ChEBI" id="CHEBI:134035"/>
    </reaction>
    <physiologicalReaction direction="left-to-right" evidence="2">
        <dbReference type="Rhea" id="RHEA:51361"/>
    </physiologicalReaction>
    <physiologicalReaction direction="right-to-left" evidence="2">
        <dbReference type="Rhea" id="RHEA:51362"/>
    </physiologicalReaction>
</comment>
<comment type="catalytic activity">
    <reaction evidence="2">
        <text>L-phenylalanine + (9Z)-octadecenoate = N-(9Z-octadecenoyl)-L-phenylalanine + H2O</text>
        <dbReference type="Rhea" id="RHEA:51300"/>
        <dbReference type="ChEBI" id="CHEBI:15377"/>
        <dbReference type="ChEBI" id="CHEBI:30823"/>
        <dbReference type="ChEBI" id="CHEBI:58095"/>
        <dbReference type="ChEBI" id="CHEBI:134020"/>
    </reaction>
    <physiologicalReaction direction="left-to-right" evidence="2">
        <dbReference type="Rhea" id="RHEA:51301"/>
    </physiologicalReaction>
    <physiologicalReaction direction="right-to-left" evidence="2">
        <dbReference type="Rhea" id="RHEA:51302"/>
    </physiologicalReaction>
</comment>
<comment type="cofactor">
    <cofactor evidence="1">
        <name>Zn(2+)</name>
        <dbReference type="ChEBI" id="CHEBI:29105"/>
    </cofactor>
    <text evidence="1">Binds 2 Zn(2+) ions per subunit.</text>
</comment>
<comment type="activity regulation">
    <text evidence="2">Lipoproteins are powerful coactivators of PM20D1 activity in vitro and NAA biosynthesis in vivo.</text>
</comment>
<comment type="pathway">
    <text evidence="2">Amino-acid metabolism.</text>
</comment>
<comment type="pathway">
    <text evidence="2">Energy metabolism; electron transfer.</text>
</comment>
<comment type="pathway">
    <text evidence="2">Lipid metabolism; fatty acid metabolism.</text>
</comment>
<comment type="subcellular location">
    <subcellularLocation>
        <location evidence="2">Secreted</location>
    </subcellularLocation>
</comment>
<comment type="similarity">
    <text evidence="4">Belongs to the peptidase M20A family.</text>
</comment>
<dbReference type="EC" id="3.5.1.114" evidence="2"/>
<dbReference type="EC" id="3.5.1.14" evidence="2"/>
<dbReference type="EMBL" id="BC111351">
    <property type="protein sequence ID" value="AAI11352.1"/>
    <property type="molecule type" value="mRNA"/>
</dbReference>
<dbReference type="RefSeq" id="NP_001033189.1">
    <property type="nucleotide sequence ID" value="NM_001038100.1"/>
</dbReference>
<dbReference type="SMR" id="Q2T9M7"/>
<dbReference type="FunCoup" id="Q2T9M7">
    <property type="interactions" value="131"/>
</dbReference>
<dbReference type="STRING" id="9913.ENSBTAP00000047683"/>
<dbReference type="MEROPS" id="M20.011"/>
<dbReference type="GlyCosmos" id="Q2T9M7">
    <property type="glycosylation" value="1 site, No reported glycans"/>
</dbReference>
<dbReference type="GlyGen" id="Q2T9M7">
    <property type="glycosylation" value="1 site"/>
</dbReference>
<dbReference type="PaxDb" id="9913-ENSBTAP00000047683"/>
<dbReference type="GeneID" id="513852"/>
<dbReference type="KEGG" id="bta:513852"/>
<dbReference type="CTD" id="148811"/>
<dbReference type="eggNOG" id="KOG2275">
    <property type="taxonomic scope" value="Eukaryota"/>
</dbReference>
<dbReference type="InParanoid" id="Q2T9M7"/>
<dbReference type="OrthoDB" id="3064516at2759"/>
<dbReference type="UniPathway" id="UPA00092"/>
<dbReference type="UniPathway" id="UPA00199"/>
<dbReference type="Proteomes" id="UP000009136">
    <property type="component" value="Unplaced"/>
</dbReference>
<dbReference type="GO" id="GO:0005615">
    <property type="term" value="C:extracellular space"/>
    <property type="evidence" value="ECO:0000250"/>
    <property type="project" value="UniProtKB"/>
</dbReference>
<dbReference type="GO" id="GO:0004046">
    <property type="term" value="F:aminoacylase activity"/>
    <property type="evidence" value="ECO:0007669"/>
    <property type="project" value="UniProtKB-EC"/>
</dbReference>
<dbReference type="GO" id="GO:0016811">
    <property type="term" value="F:hydrolase activity, acting on carbon-nitrogen (but not peptide) bonds, in linear amides"/>
    <property type="evidence" value="ECO:0000250"/>
    <property type="project" value="UniProtKB"/>
</dbReference>
<dbReference type="GO" id="GO:0016829">
    <property type="term" value="F:lyase activity"/>
    <property type="evidence" value="ECO:0007669"/>
    <property type="project" value="UniProtKB-KW"/>
</dbReference>
<dbReference type="GO" id="GO:0046872">
    <property type="term" value="F:metal ion binding"/>
    <property type="evidence" value="ECO:0007669"/>
    <property type="project" value="UniProtKB-KW"/>
</dbReference>
<dbReference type="GO" id="GO:0008233">
    <property type="term" value="F:peptidase activity"/>
    <property type="evidence" value="ECO:0007669"/>
    <property type="project" value="UniProtKB-KW"/>
</dbReference>
<dbReference type="GO" id="GO:1990845">
    <property type="term" value="P:adaptive thermogenesis"/>
    <property type="evidence" value="ECO:0000250"/>
    <property type="project" value="UniProtKB"/>
</dbReference>
<dbReference type="GO" id="GO:0043604">
    <property type="term" value="P:amide biosynthetic process"/>
    <property type="evidence" value="ECO:0000250"/>
    <property type="project" value="UniProtKB"/>
</dbReference>
<dbReference type="GO" id="GO:0043605">
    <property type="term" value="P:amide catabolic process"/>
    <property type="evidence" value="ECO:0000250"/>
    <property type="project" value="UniProtKB"/>
</dbReference>
<dbReference type="GO" id="GO:0006520">
    <property type="term" value="P:amino acid metabolic process"/>
    <property type="evidence" value="ECO:0000250"/>
    <property type="project" value="UniProtKB"/>
</dbReference>
<dbReference type="GO" id="GO:0097009">
    <property type="term" value="P:energy homeostasis"/>
    <property type="evidence" value="ECO:0000250"/>
    <property type="project" value="UniProtKB"/>
</dbReference>
<dbReference type="GO" id="GO:0006631">
    <property type="term" value="P:fatty acid metabolic process"/>
    <property type="evidence" value="ECO:0007669"/>
    <property type="project" value="UniProtKB-UniPathway"/>
</dbReference>
<dbReference type="GO" id="GO:0006629">
    <property type="term" value="P:lipid metabolic process"/>
    <property type="evidence" value="ECO:0000250"/>
    <property type="project" value="UniProtKB"/>
</dbReference>
<dbReference type="GO" id="GO:0006508">
    <property type="term" value="P:proteolysis"/>
    <property type="evidence" value="ECO:0007669"/>
    <property type="project" value="UniProtKB-KW"/>
</dbReference>
<dbReference type="GO" id="GO:0022904">
    <property type="term" value="P:respiratory electron transport chain"/>
    <property type="evidence" value="ECO:0007669"/>
    <property type="project" value="UniProtKB-UniPathway"/>
</dbReference>
<dbReference type="CDD" id="cd05674">
    <property type="entry name" value="M20_yscS"/>
    <property type="match status" value="1"/>
</dbReference>
<dbReference type="FunFam" id="1.10.150.900:FF:000003">
    <property type="entry name" value="N-fatty-acyl-amino acid synthase/hydrolase PM20D1"/>
    <property type="match status" value="1"/>
</dbReference>
<dbReference type="FunFam" id="3.40.630.10:FF:000027">
    <property type="entry name" value="N-fatty-acyl-amino acid synthase/hydrolase PM20D1"/>
    <property type="match status" value="1"/>
</dbReference>
<dbReference type="Gene3D" id="1.10.150.900">
    <property type="match status" value="1"/>
</dbReference>
<dbReference type="Gene3D" id="3.30.70.360">
    <property type="match status" value="1"/>
</dbReference>
<dbReference type="Gene3D" id="3.40.630.10">
    <property type="entry name" value="Zn peptidases"/>
    <property type="match status" value="1"/>
</dbReference>
<dbReference type="InterPro" id="IPR036264">
    <property type="entry name" value="Bact_exopeptidase_dim_dom"/>
</dbReference>
<dbReference type="InterPro" id="IPR047177">
    <property type="entry name" value="Pept_M20A"/>
</dbReference>
<dbReference type="InterPro" id="IPR002933">
    <property type="entry name" value="Peptidase_M20"/>
</dbReference>
<dbReference type="InterPro" id="IPR011650">
    <property type="entry name" value="Peptidase_M20_dimer"/>
</dbReference>
<dbReference type="PANTHER" id="PTHR45962">
    <property type="entry name" value="N-FATTY-ACYL-AMINO ACID SYNTHASE/HYDROLASE PM20D1"/>
    <property type="match status" value="1"/>
</dbReference>
<dbReference type="PANTHER" id="PTHR45962:SF1">
    <property type="entry name" value="N-FATTY-ACYL-AMINO ACID SYNTHASE_HYDROLASE PM20D1"/>
    <property type="match status" value="1"/>
</dbReference>
<dbReference type="Pfam" id="PF07687">
    <property type="entry name" value="M20_dimer"/>
    <property type="match status" value="1"/>
</dbReference>
<dbReference type="Pfam" id="PF01546">
    <property type="entry name" value="Peptidase_M20"/>
    <property type="match status" value="1"/>
</dbReference>
<dbReference type="SUPFAM" id="SSF55031">
    <property type="entry name" value="Bacterial exopeptidase dimerisation domain"/>
    <property type="match status" value="1"/>
</dbReference>
<dbReference type="SUPFAM" id="SSF53187">
    <property type="entry name" value="Zn-dependent exopeptidases"/>
    <property type="match status" value="1"/>
</dbReference>
<protein>
    <recommendedName>
        <fullName evidence="4">N-fatty-acyl-amino acid synthase/hydrolase PM20D1</fullName>
        <ecNumber evidence="2">3.5.1.114</ecNumber>
        <ecNumber evidence="2">3.5.1.14</ecNumber>
    </recommendedName>
    <alternativeName>
        <fullName evidence="2">Peptidase M20 domain-containing protein 1</fullName>
    </alternativeName>
</protein>
<sequence>MARPSVCLLASLSALLLGIAAVSRSKGLRGTESQREPRIPSQFSQEQRIAMKEALKGAIQIPTVSFSPKELNTTALAEFGEYIRKVFPTVFHTSFIRHEVVGNYSHLFTIKGSDPSMQPYILLAHIDVVPAPDKGWDVPPFSGLERDGFIYGRGTLDNKNYLMAILQALELLLIRNYIPRRSFFIALGHDEEISGINGAQKISALLQARGVQLAFVVDEGSFILDGFIPYLKKPFAMVSVSEKGAINLMLQVNTTTGHSSAPPKETSIGILAAAVSRLEQTPMPNMFGSGPLMTAVEQLANEFPFPTNIVLNNLWLFRPLVSRLMERNYITNSLVRTTTALTMFNAGVKVNVIPPVAEAIINFRLHPAQTVQEVLKLAKDIVADDRIQFHVLDAFDPLPISPSDDQALGYQLLRQTIHSVFPEVNIVAPGTCIGNTDSRHYLNLTTGIYRFNPIYLQPQDFSSIHGINEKISVQAYETQVKFVFEFIQNGDTDEETVPHLHEL</sequence>
<reference key="1">
    <citation type="submission" date="2005-12" db="EMBL/GenBank/DDBJ databases">
        <authorList>
            <consortium name="NIH - Mammalian Gene Collection (MGC) project"/>
        </authorList>
    </citation>
    <scope>NUCLEOTIDE SEQUENCE [LARGE SCALE MRNA]</scope>
    <source>
        <strain>Crossbred X Angus</strain>
        <tissue>Liver</tissue>
    </source>
</reference>